<protein>
    <recommendedName>
        <fullName>Ribonuclease pancreatic</fullName>
        <ecNumber>4.6.1.18</ecNumber>
    </recommendedName>
    <alternativeName>
        <fullName>RNase 1</fullName>
    </alternativeName>
    <alternativeName>
        <fullName>RNase A</fullName>
    </alternativeName>
</protein>
<name>RNAS1_GERNI</name>
<accession>Q9WUS2</accession>
<sequence>MGLEKSLLLLPLLVLVLGCVQPSLGKESSAMKFERQHMDSEGTGSSPTYCNQMMKRREMTKGSCKPVNTFVHEPLADVQAVCSQEKVTCKNGKSNCYKSSSALHITDCHLKGNSKYPNCDYKTSNYQKHIIVACEGNPYVPVHFDASV</sequence>
<keyword id="KW-1015">Disulfide bond</keyword>
<keyword id="KW-0255">Endonuclease</keyword>
<keyword id="KW-0378">Hydrolase</keyword>
<keyword id="KW-0456">Lyase</keyword>
<keyword id="KW-0540">Nuclease</keyword>
<keyword id="KW-0964">Secreted</keyword>
<keyword id="KW-0732">Signal</keyword>
<comment type="function">
    <text evidence="1">Endonuclease that catalyzes the cleavage of RNA on the 3' side of pyrimidine nucleotides. Acts on single-stranded and double-stranded RNA (By similarity).</text>
</comment>
<comment type="catalytic activity">
    <reaction>
        <text>an [RNA] containing cytidine + H2O = an [RNA]-3'-cytidine-3'-phosphate + a 5'-hydroxy-ribonucleotide-3'-[RNA].</text>
        <dbReference type="EC" id="4.6.1.18"/>
    </reaction>
</comment>
<comment type="catalytic activity">
    <reaction>
        <text>an [RNA] containing uridine + H2O = an [RNA]-3'-uridine-3'-phosphate + a 5'-hydroxy-ribonucleotide-3'-[RNA].</text>
        <dbReference type="EC" id="4.6.1.18"/>
    </reaction>
</comment>
<comment type="subunit">
    <text evidence="1">Monomer. Interacts with and forms tight 1:1 complexes with RNH1. Dimerization of two such complexes may occur. Interaction with RNH1 inhibits this protein (By similarity).</text>
</comment>
<comment type="subcellular location">
    <subcellularLocation>
        <location>Secreted</location>
    </subcellularLocation>
</comment>
<comment type="tissue specificity">
    <text>Pancreas.</text>
</comment>
<comment type="similarity">
    <text evidence="3">Belongs to the pancreatic ribonuclease family.</text>
</comment>
<proteinExistence type="evidence at transcript level"/>
<gene>
    <name type="primary">RNASE1</name>
</gene>
<reference key="1">
    <citation type="journal article" date="1999" name="Mol. Phylogenet. Evol.">
        <title>The phylogenetic position of 'Acomyinae' (Rodentia, Mammalia) as sister group of a Murinae + Gerbillinae clade: evidence from the nuclear ribonuclease gene.</title>
        <authorList>
            <person name="Dubois J.-Y.F."/>
            <person name="Catzeflis F.M."/>
            <person name="Beintema J.J."/>
        </authorList>
    </citation>
    <scope>NUCLEOTIDE SEQUENCE [GENOMIC DNA]</scope>
</reference>
<feature type="signal peptide" evidence="2">
    <location>
        <begin position="1"/>
        <end position="25"/>
    </location>
</feature>
<feature type="chain" id="PRO_0000030919" description="Ribonuclease pancreatic">
    <location>
        <begin position="26"/>
        <end position="148"/>
    </location>
</feature>
<feature type="active site" description="Proton acceptor" evidence="1">
    <location>
        <position position="37"/>
    </location>
</feature>
<feature type="active site" description="Proton donor" evidence="1">
    <location>
        <position position="143"/>
    </location>
</feature>
<feature type="binding site" evidence="1">
    <location>
        <position position="32"/>
    </location>
    <ligand>
        <name>substrate</name>
    </ligand>
</feature>
<feature type="binding site" evidence="1">
    <location>
        <position position="35"/>
    </location>
    <ligand>
        <name>substrate</name>
    </ligand>
</feature>
<feature type="binding site" evidence="1">
    <location>
        <begin position="65"/>
        <end position="69"/>
    </location>
    <ligand>
        <name>substrate</name>
    </ligand>
</feature>
<feature type="binding site" evidence="1">
    <location>
        <position position="90"/>
    </location>
    <ligand>
        <name>substrate</name>
    </ligand>
</feature>
<feature type="disulfide bond" evidence="1">
    <location>
        <begin position="50"/>
        <end position="108"/>
    </location>
</feature>
<feature type="disulfide bond" evidence="1">
    <location>
        <begin position="64"/>
        <end position="119"/>
    </location>
</feature>
<feature type="disulfide bond" evidence="1">
    <location>
        <begin position="82"/>
        <end position="134"/>
    </location>
</feature>
<feature type="disulfide bond" evidence="1">
    <location>
        <begin position="89"/>
        <end position="96"/>
    </location>
</feature>
<evidence type="ECO:0000250" key="1"/>
<evidence type="ECO:0000255" key="2"/>
<evidence type="ECO:0000305" key="3"/>
<organism>
    <name type="scientific">Gerbillus nigeriae</name>
    <name type="common">Nigerian gerbil</name>
    <dbReference type="NCBI Taxonomy" id="39472"/>
    <lineage>
        <taxon>Eukaryota</taxon>
        <taxon>Metazoa</taxon>
        <taxon>Chordata</taxon>
        <taxon>Craniata</taxon>
        <taxon>Vertebrata</taxon>
        <taxon>Euteleostomi</taxon>
        <taxon>Mammalia</taxon>
        <taxon>Eutheria</taxon>
        <taxon>Euarchontoglires</taxon>
        <taxon>Glires</taxon>
        <taxon>Rodentia</taxon>
        <taxon>Myomorpha</taxon>
        <taxon>Muroidea</taxon>
        <taxon>Muridae</taxon>
        <taxon>Gerbillinae</taxon>
        <taxon>Gerbillus</taxon>
    </lineage>
</organism>
<dbReference type="EC" id="4.6.1.18"/>
<dbReference type="EMBL" id="AJ005774">
    <property type="protein sequence ID" value="CAB41479.1"/>
    <property type="molecule type" value="Genomic_DNA"/>
</dbReference>
<dbReference type="SMR" id="Q9WUS2"/>
<dbReference type="GO" id="GO:0005576">
    <property type="term" value="C:extracellular region"/>
    <property type="evidence" value="ECO:0007669"/>
    <property type="project" value="UniProtKB-SubCell"/>
</dbReference>
<dbReference type="GO" id="GO:0016829">
    <property type="term" value="F:lyase activity"/>
    <property type="evidence" value="ECO:0007669"/>
    <property type="project" value="UniProtKB-KW"/>
</dbReference>
<dbReference type="GO" id="GO:0003676">
    <property type="term" value="F:nucleic acid binding"/>
    <property type="evidence" value="ECO:0007669"/>
    <property type="project" value="InterPro"/>
</dbReference>
<dbReference type="GO" id="GO:0004522">
    <property type="term" value="F:ribonuclease A activity"/>
    <property type="evidence" value="ECO:0007669"/>
    <property type="project" value="UniProtKB-EC"/>
</dbReference>
<dbReference type="GO" id="GO:0050830">
    <property type="term" value="P:defense response to Gram-positive bacterium"/>
    <property type="evidence" value="ECO:0007669"/>
    <property type="project" value="TreeGrafter"/>
</dbReference>
<dbReference type="CDD" id="cd06265">
    <property type="entry name" value="RNase_A_canonical"/>
    <property type="match status" value="1"/>
</dbReference>
<dbReference type="FunFam" id="3.10.130.10:FF:000001">
    <property type="entry name" value="Ribonuclease pancreatic"/>
    <property type="match status" value="1"/>
</dbReference>
<dbReference type="Gene3D" id="3.10.130.10">
    <property type="entry name" value="Ribonuclease A-like domain"/>
    <property type="match status" value="1"/>
</dbReference>
<dbReference type="InterPro" id="IPR001427">
    <property type="entry name" value="RNaseA"/>
</dbReference>
<dbReference type="InterPro" id="IPR036816">
    <property type="entry name" value="RNaseA-like_dom_sf"/>
</dbReference>
<dbReference type="InterPro" id="IPR023411">
    <property type="entry name" value="RNaseA_AS"/>
</dbReference>
<dbReference type="InterPro" id="IPR023412">
    <property type="entry name" value="RNaseA_domain"/>
</dbReference>
<dbReference type="PANTHER" id="PTHR11437">
    <property type="entry name" value="RIBONUCLEASE"/>
    <property type="match status" value="1"/>
</dbReference>
<dbReference type="PANTHER" id="PTHR11437:SF24">
    <property type="entry name" value="RIBONUCLEASE PANCREATIC"/>
    <property type="match status" value="1"/>
</dbReference>
<dbReference type="Pfam" id="PF00074">
    <property type="entry name" value="RnaseA"/>
    <property type="match status" value="1"/>
</dbReference>
<dbReference type="PRINTS" id="PR00794">
    <property type="entry name" value="RIBONUCLEASE"/>
</dbReference>
<dbReference type="SMART" id="SM00092">
    <property type="entry name" value="RNAse_Pc"/>
    <property type="match status" value="1"/>
</dbReference>
<dbReference type="SUPFAM" id="SSF54076">
    <property type="entry name" value="RNase A-like"/>
    <property type="match status" value="1"/>
</dbReference>
<dbReference type="PROSITE" id="PS00127">
    <property type="entry name" value="RNASE_PANCREATIC"/>
    <property type="match status" value="1"/>
</dbReference>